<feature type="chain" id="PRO_1000060594" description="Integration host factor subunit beta">
    <location>
        <begin position="1"/>
        <end position="104"/>
    </location>
</feature>
<sequence>MTKSELIARLSERLAERNSQLVYKDAELAVKTILDAMANNLAQGSRIEIRGFGSFDLNYRPPRVGRNPKSGASVSVPEKYVPHFKAGKELRERVDLSLLEQTQA</sequence>
<comment type="function">
    <text evidence="1">This protein is one of the two subunits of integration host factor, a specific DNA-binding protein that functions in genetic recombination as well as in transcriptional and translational control.</text>
</comment>
<comment type="subunit">
    <text evidence="1">Heterodimer of an alpha and a beta chain.</text>
</comment>
<comment type="similarity">
    <text evidence="1">Belongs to the bacterial histone-like protein family.</text>
</comment>
<keyword id="KW-0233">DNA recombination</keyword>
<keyword id="KW-0238">DNA-binding</keyword>
<keyword id="KW-1185">Reference proteome</keyword>
<keyword id="KW-0804">Transcription</keyword>
<keyword id="KW-0805">Transcription regulation</keyword>
<keyword id="KW-0810">Translation regulation</keyword>
<dbReference type="EMBL" id="AE016825">
    <property type="protein sequence ID" value="AAQ60714.1"/>
    <property type="molecule type" value="Genomic_DNA"/>
</dbReference>
<dbReference type="RefSeq" id="WP_011136592.1">
    <property type="nucleotide sequence ID" value="NC_005085.1"/>
</dbReference>
<dbReference type="SMR" id="Q7NTK9"/>
<dbReference type="STRING" id="243365.CV_3045"/>
<dbReference type="GeneID" id="66368751"/>
<dbReference type="KEGG" id="cvi:CV_3045"/>
<dbReference type="eggNOG" id="COG0776">
    <property type="taxonomic scope" value="Bacteria"/>
</dbReference>
<dbReference type="HOGENOM" id="CLU_105066_2_0_4"/>
<dbReference type="OrthoDB" id="9804203at2"/>
<dbReference type="Proteomes" id="UP000001424">
    <property type="component" value="Chromosome"/>
</dbReference>
<dbReference type="GO" id="GO:0005694">
    <property type="term" value="C:chromosome"/>
    <property type="evidence" value="ECO:0007669"/>
    <property type="project" value="InterPro"/>
</dbReference>
<dbReference type="GO" id="GO:0005829">
    <property type="term" value="C:cytosol"/>
    <property type="evidence" value="ECO:0007669"/>
    <property type="project" value="TreeGrafter"/>
</dbReference>
<dbReference type="GO" id="GO:0003677">
    <property type="term" value="F:DNA binding"/>
    <property type="evidence" value="ECO:0007669"/>
    <property type="project" value="UniProtKB-UniRule"/>
</dbReference>
<dbReference type="GO" id="GO:0030527">
    <property type="term" value="F:structural constituent of chromatin"/>
    <property type="evidence" value="ECO:0007669"/>
    <property type="project" value="InterPro"/>
</dbReference>
<dbReference type="GO" id="GO:0006310">
    <property type="term" value="P:DNA recombination"/>
    <property type="evidence" value="ECO:0007669"/>
    <property type="project" value="UniProtKB-UniRule"/>
</dbReference>
<dbReference type="GO" id="GO:0006355">
    <property type="term" value="P:regulation of DNA-templated transcription"/>
    <property type="evidence" value="ECO:0007669"/>
    <property type="project" value="UniProtKB-UniRule"/>
</dbReference>
<dbReference type="GO" id="GO:0006417">
    <property type="term" value="P:regulation of translation"/>
    <property type="evidence" value="ECO:0007669"/>
    <property type="project" value="UniProtKB-UniRule"/>
</dbReference>
<dbReference type="CDD" id="cd13836">
    <property type="entry name" value="IHF_B"/>
    <property type="match status" value="1"/>
</dbReference>
<dbReference type="Gene3D" id="4.10.520.10">
    <property type="entry name" value="IHF-like DNA-binding proteins"/>
    <property type="match status" value="1"/>
</dbReference>
<dbReference type="HAMAP" id="MF_00381">
    <property type="entry name" value="IHF_beta"/>
    <property type="match status" value="1"/>
</dbReference>
<dbReference type="InterPro" id="IPR000119">
    <property type="entry name" value="Hist_DNA-bd"/>
</dbReference>
<dbReference type="InterPro" id="IPR010992">
    <property type="entry name" value="IHF-like_DNA-bd_dom_sf"/>
</dbReference>
<dbReference type="InterPro" id="IPR005685">
    <property type="entry name" value="IHF_beta"/>
</dbReference>
<dbReference type="NCBIfam" id="TIGR00988">
    <property type="entry name" value="hip"/>
    <property type="match status" value="1"/>
</dbReference>
<dbReference type="NCBIfam" id="NF001222">
    <property type="entry name" value="PRK00199.1"/>
    <property type="match status" value="1"/>
</dbReference>
<dbReference type="PANTHER" id="PTHR33175">
    <property type="entry name" value="DNA-BINDING PROTEIN HU"/>
    <property type="match status" value="1"/>
</dbReference>
<dbReference type="PANTHER" id="PTHR33175:SF5">
    <property type="entry name" value="INTEGRATION HOST FACTOR SUBUNIT BETA"/>
    <property type="match status" value="1"/>
</dbReference>
<dbReference type="Pfam" id="PF00216">
    <property type="entry name" value="Bac_DNA_binding"/>
    <property type="match status" value="1"/>
</dbReference>
<dbReference type="PRINTS" id="PR01727">
    <property type="entry name" value="DNABINDINGHU"/>
</dbReference>
<dbReference type="SMART" id="SM00411">
    <property type="entry name" value="BHL"/>
    <property type="match status" value="1"/>
</dbReference>
<dbReference type="SUPFAM" id="SSF47729">
    <property type="entry name" value="IHF-like DNA-binding proteins"/>
    <property type="match status" value="1"/>
</dbReference>
<evidence type="ECO:0000255" key="1">
    <source>
        <dbReference type="HAMAP-Rule" id="MF_00381"/>
    </source>
</evidence>
<reference key="1">
    <citation type="journal article" date="2003" name="Proc. Natl. Acad. Sci. U.S.A.">
        <title>The complete genome sequence of Chromobacterium violaceum reveals remarkable and exploitable bacterial adaptability.</title>
        <authorList>
            <person name="Vasconcelos A.T.R."/>
            <person name="de Almeida D.F."/>
            <person name="Hungria M."/>
            <person name="Guimaraes C.T."/>
            <person name="Antonio R.V."/>
            <person name="Almeida F.C."/>
            <person name="de Almeida L.G.P."/>
            <person name="de Almeida R."/>
            <person name="Alves-Gomes J.A."/>
            <person name="Andrade E.M."/>
            <person name="Araripe J."/>
            <person name="de Araujo M.F.F."/>
            <person name="Astolfi-Filho S."/>
            <person name="Azevedo V."/>
            <person name="Baptista A.J."/>
            <person name="Bataus L.A.M."/>
            <person name="Batista J.S."/>
            <person name="Belo A."/>
            <person name="van den Berg C."/>
            <person name="Bogo M."/>
            <person name="Bonatto S."/>
            <person name="Bordignon J."/>
            <person name="Brigido M.M."/>
            <person name="Brito C.A."/>
            <person name="Brocchi M."/>
            <person name="Burity H.A."/>
            <person name="Camargo A.A."/>
            <person name="Cardoso D.D.P."/>
            <person name="Carneiro N.P."/>
            <person name="Carraro D.M."/>
            <person name="Carvalho C.M.B."/>
            <person name="Cascardo J.C.M."/>
            <person name="Cavada B.S."/>
            <person name="Chueire L.M.O."/>
            <person name="Creczynski-Pasa T.B."/>
            <person name="Cunha-Junior N.C."/>
            <person name="Fagundes N."/>
            <person name="Falcao C.L."/>
            <person name="Fantinatti F."/>
            <person name="Farias I.P."/>
            <person name="Felipe M.S.S."/>
            <person name="Ferrari L.P."/>
            <person name="Ferro J.A."/>
            <person name="Ferro M.I.T."/>
            <person name="Franco G.R."/>
            <person name="Freitas N.S.A."/>
            <person name="Furlan L.R."/>
            <person name="Gazzinelli R.T."/>
            <person name="Gomes E.A."/>
            <person name="Goncalves P.R."/>
            <person name="Grangeiro T.B."/>
            <person name="Grattapaglia D."/>
            <person name="Grisard E.C."/>
            <person name="Hanna E.S."/>
            <person name="Jardim S.N."/>
            <person name="Laurino J."/>
            <person name="Leoi L.C.T."/>
            <person name="Lima L.F.A."/>
            <person name="Loureiro M.F."/>
            <person name="Lyra M.C.C.P."/>
            <person name="Madeira H.M.F."/>
            <person name="Manfio G.P."/>
            <person name="Maranhao A.Q."/>
            <person name="Martins W.S."/>
            <person name="di Mauro S.M.Z."/>
            <person name="de Medeiros S.R.B."/>
            <person name="Meissner R.V."/>
            <person name="Moreira M.A.M."/>
            <person name="Nascimento F.F."/>
            <person name="Nicolas M.F."/>
            <person name="Oliveira J.G."/>
            <person name="Oliveira S.C."/>
            <person name="Paixao R.F.C."/>
            <person name="Parente J.A."/>
            <person name="Pedrosa F.O."/>
            <person name="Pena S.D.J."/>
            <person name="Pereira J.O."/>
            <person name="Pereira M."/>
            <person name="Pinto L.S.R.C."/>
            <person name="Pinto L.S."/>
            <person name="Porto J.I.R."/>
            <person name="Potrich D.P."/>
            <person name="Ramalho-Neto C.E."/>
            <person name="Reis A.M.M."/>
            <person name="Rigo L.U."/>
            <person name="Rondinelli E."/>
            <person name="Santos E.B.P."/>
            <person name="Santos F.R."/>
            <person name="Schneider M.P.C."/>
            <person name="Seuanez H.N."/>
            <person name="Silva A.M.R."/>
            <person name="da Silva A.L.C."/>
            <person name="Silva D.W."/>
            <person name="Silva R."/>
            <person name="Simoes I.C."/>
            <person name="Simon D."/>
            <person name="Soares C.M.A."/>
            <person name="Soares R.B.A."/>
            <person name="Souza E.M."/>
            <person name="Souza K.R.L."/>
            <person name="Souza R.C."/>
            <person name="Steffens M.B.R."/>
            <person name="Steindel M."/>
            <person name="Teixeira S.R."/>
            <person name="Urmenyi T."/>
            <person name="Vettore A."/>
            <person name="Wassem R."/>
            <person name="Zaha A."/>
            <person name="Simpson A.J.G."/>
        </authorList>
    </citation>
    <scope>NUCLEOTIDE SEQUENCE [LARGE SCALE GENOMIC DNA]</scope>
    <source>
        <strain>ATCC 12472 / DSM 30191 / JCM 1249 / CCUG 213 / NBRC 12614 / NCIMB 9131 / NCTC 9757 / MK</strain>
    </source>
</reference>
<organism>
    <name type="scientific">Chromobacterium violaceum (strain ATCC 12472 / DSM 30191 / JCM 1249 / CCUG 213 / NBRC 12614 / NCIMB 9131 / NCTC 9757 / MK)</name>
    <dbReference type="NCBI Taxonomy" id="243365"/>
    <lineage>
        <taxon>Bacteria</taxon>
        <taxon>Pseudomonadati</taxon>
        <taxon>Pseudomonadota</taxon>
        <taxon>Betaproteobacteria</taxon>
        <taxon>Neisseriales</taxon>
        <taxon>Chromobacteriaceae</taxon>
        <taxon>Chromobacterium</taxon>
    </lineage>
</organism>
<gene>
    <name evidence="1" type="primary">ihfB</name>
    <name evidence="1" type="synonym">himD</name>
    <name type="ordered locus">CV_3045</name>
</gene>
<proteinExistence type="inferred from homology"/>
<protein>
    <recommendedName>
        <fullName evidence="1">Integration host factor subunit beta</fullName>
        <shortName evidence="1">IHF-beta</shortName>
    </recommendedName>
</protein>
<name>IHFB_CHRVO</name>
<accession>Q7NTK9</accession>